<gene>
    <name type="primary">Nsd3</name>
    <name type="synonym">Whsc1l1</name>
</gene>
<organism>
    <name type="scientific">Mus musculus</name>
    <name type="common">Mouse</name>
    <dbReference type="NCBI Taxonomy" id="10090"/>
    <lineage>
        <taxon>Eukaryota</taxon>
        <taxon>Metazoa</taxon>
        <taxon>Chordata</taxon>
        <taxon>Craniata</taxon>
        <taxon>Vertebrata</taxon>
        <taxon>Euteleostomi</taxon>
        <taxon>Mammalia</taxon>
        <taxon>Eutheria</taxon>
        <taxon>Euarchontoglires</taxon>
        <taxon>Glires</taxon>
        <taxon>Rodentia</taxon>
        <taxon>Myomorpha</taxon>
        <taxon>Muroidea</taxon>
        <taxon>Muridae</taxon>
        <taxon>Murinae</taxon>
        <taxon>Mus</taxon>
        <taxon>Mus</taxon>
    </lineage>
</organism>
<dbReference type="EC" id="2.1.1.370" evidence="2"/>
<dbReference type="EC" id="2.1.1.371" evidence="2"/>
<dbReference type="EMBL" id="AK079952">
    <property type="protein sequence ID" value="BAC37792.1"/>
    <property type="molecule type" value="mRNA"/>
</dbReference>
<dbReference type="EMBL" id="AK132725">
    <property type="protein sequence ID" value="BAE21322.1"/>
    <property type="molecule type" value="mRNA"/>
</dbReference>
<dbReference type="EMBL" id="AK156746">
    <property type="protein sequence ID" value="BAE33834.1"/>
    <property type="molecule type" value="mRNA"/>
</dbReference>
<dbReference type="EMBL" id="AK170040">
    <property type="protein sequence ID" value="BAE41526.1"/>
    <property type="molecule type" value="mRNA"/>
</dbReference>
<dbReference type="EMBL" id="AC156990">
    <property type="status" value="NOT_ANNOTATED_CDS"/>
    <property type="molecule type" value="Genomic_DNA"/>
</dbReference>
<dbReference type="EMBL" id="AC162367">
    <property type="status" value="NOT_ANNOTATED_CDS"/>
    <property type="molecule type" value="Genomic_DNA"/>
</dbReference>
<dbReference type="EMBL" id="BC064447">
    <property type="protein sequence ID" value="AAH64447.1"/>
    <property type="molecule type" value="mRNA"/>
</dbReference>
<dbReference type="CCDS" id="CCDS40305.1">
    <molecule id="Q6P2L6-2"/>
</dbReference>
<dbReference type="CCDS" id="CCDS85518.1">
    <molecule id="Q6P2L6-4"/>
</dbReference>
<dbReference type="RefSeq" id="NP_001001735.1">
    <molecule id="Q6P2L6-2"/>
    <property type="nucleotide sequence ID" value="NM_001001735.2"/>
</dbReference>
<dbReference type="RefSeq" id="NP_001295410.1">
    <molecule id="Q6P2L6-2"/>
    <property type="nucleotide sequence ID" value="NM_001308481.1"/>
</dbReference>
<dbReference type="RefSeq" id="NP_001295411.1">
    <molecule id="Q6P2L6-4"/>
    <property type="nucleotide sequence ID" value="NM_001308482.1"/>
</dbReference>
<dbReference type="SMR" id="Q6P2L6"/>
<dbReference type="BioGRID" id="231497">
    <property type="interactions" value="2"/>
</dbReference>
<dbReference type="FunCoup" id="Q6P2L6">
    <property type="interactions" value="4612"/>
</dbReference>
<dbReference type="STRING" id="10090.ENSMUSP00000117778"/>
<dbReference type="GlyGen" id="Q6P2L6">
    <property type="glycosylation" value="1 site, 1 N-linked glycan (1 site)"/>
</dbReference>
<dbReference type="iPTMnet" id="Q6P2L6"/>
<dbReference type="PhosphoSitePlus" id="Q6P2L6"/>
<dbReference type="jPOST" id="Q6P2L6"/>
<dbReference type="PaxDb" id="10090-ENSMUSP00000115470"/>
<dbReference type="PeptideAtlas" id="Q6P2L6"/>
<dbReference type="ProteomicsDB" id="293980">
    <molecule id="Q6P2L6-1"/>
</dbReference>
<dbReference type="ProteomicsDB" id="293981">
    <molecule id="Q6P2L6-2"/>
</dbReference>
<dbReference type="ProteomicsDB" id="293982">
    <molecule id="Q6P2L6-3"/>
</dbReference>
<dbReference type="ProteomicsDB" id="293983">
    <molecule id="Q6P2L6-4"/>
</dbReference>
<dbReference type="Pumba" id="Q6P2L6"/>
<dbReference type="ABCD" id="Q6P2L6">
    <property type="antibodies" value="1 sequenced antibody"/>
</dbReference>
<dbReference type="Antibodypedia" id="984">
    <property type="antibodies" value="379 antibodies from 36 providers"/>
</dbReference>
<dbReference type="DNASU" id="234135"/>
<dbReference type="Ensembl" id="ENSMUST00000136107.9">
    <molecule id="Q6P2L6-4"/>
    <property type="protein sequence ID" value="ENSMUSP00000147840.2"/>
    <property type="gene ID" value="ENSMUSG00000054823.18"/>
</dbReference>
<dbReference type="Ensembl" id="ENSMUST00000146919.8">
    <molecule id="Q6P2L6-2"/>
    <property type="protein sequence ID" value="ENSMUSP00000115470.2"/>
    <property type="gene ID" value="ENSMUSG00000054823.18"/>
</dbReference>
<dbReference type="Ensembl" id="ENSMUST00000153597.3">
    <molecule id="Q6P2L6-3"/>
    <property type="protein sequence ID" value="ENSMUSP00000123028.3"/>
    <property type="gene ID" value="ENSMUSG00000054823.18"/>
</dbReference>
<dbReference type="Ensembl" id="ENSMUST00000155861.8">
    <molecule id="Q6P2L6-2"/>
    <property type="protein sequence ID" value="ENSMUSP00000117596.2"/>
    <property type="gene ID" value="ENSMUSG00000054823.18"/>
</dbReference>
<dbReference type="GeneID" id="234135"/>
<dbReference type="KEGG" id="mmu:234135"/>
<dbReference type="UCSC" id="uc009lgk.1">
    <molecule id="Q6P2L6-4"/>
    <property type="organism name" value="mouse"/>
</dbReference>
<dbReference type="UCSC" id="uc009lgm.1">
    <molecule id="Q6P2L6-2"/>
    <property type="organism name" value="mouse"/>
</dbReference>
<dbReference type="UCSC" id="uc009lgp.1">
    <molecule id="Q6P2L6-3"/>
    <property type="organism name" value="mouse"/>
</dbReference>
<dbReference type="AGR" id="MGI:2142581"/>
<dbReference type="CTD" id="54904"/>
<dbReference type="MGI" id="MGI:2142581">
    <property type="gene designation" value="Nsd3"/>
</dbReference>
<dbReference type="VEuPathDB" id="HostDB:ENSMUSG00000054823"/>
<dbReference type="eggNOG" id="KOG1081">
    <property type="taxonomic scope" value="Eukaryota"/>
</dbReference>
<dbReference type="GeneTree" id="ENSGT00940000155355"/>
<dbReference type="HOGENOM" id="CLU_488831_0_0_1"/>
<dbReference type="InParanoid" id="Q6P2L6"/>
<dbReference type="OrthoDB" id="422362at2759"/>
<dbReference type="Reactome" id="R-MMU-3214841">
    <property type="pathway name" value="PKMTs methylate histone lysines"/>
</dbReference>
<dbReference type="BioGRID-ORCS" id="234135">
    <property type="hits" value="13 hits in 84 CRISPR screens"/>
</dbReference>
<dbReference type="ChiTaRS" id="Whsc1l1">
    <property type="organism name" value="mouse"/>
</dbReference>
<dbReference type="PRO" id="PR:Q6P2L6"/>
<dbReference type="Proteomes" id="UP000000589">
    <property type="component" value="Chromosome 8"/>
</dbReference>
<dbReference type="RNAct" id="Q6P2L6">
    <property type="molecule type" value="protein"/>
</dbReference>
<dbReference type="Bgee" id="ENSMUSG00000054823">
    <property type="expression patterns" value="Expressed in manus and 225 other cell types or tissues"/>
</dbReference>
<dbReference type="ExpressionAtlas" id="Q6P2L6">
    <property type="expression patterns" value="baseline and differential"/>
</dbReference>
<dbReference type="GO" id="GO:0005694">
    <property type="term" value="C:chromosome"/>
    <property type="evidence" value="ECO:0007669"/>
    <property type="project" value="UniProtKB-SubCell"/>
</dbReference>
<dbReference type="GO" id="GO:0005634">
    <property type="term" value="C:nucleus"/>
    <property type="evidence" value="ECO:0000250"/>
    <property type="project" value="UniProtKB"/>
</dbReference>
<dbReference type="GO" id="GO:0140952">
    <property type="term" value="F:histone H3K27 dimethyltransferase activity"/>
    <property type="evidence" value="ECO:0007669"/>
    <property type="project" value="UniProtKB-EC"/>
</dbReference>
<dbReference type="GO" id="GO:0046976">
    <property type="term" value="F:histone H3K27 methyltransferase activity"/>
    <property type="evidence" value="ECO:0000314"/>
    <property type="project" value="MGI"/>
</dbReference>
<dbReference type="GO" id="GO:0140946">
    <property type="term" value="F:histone H3K4 dimethyltransferase activity"/>
    <property type="evidence" value="ECO:0007669"/>
    <property type="project" value="UniProtKB-EC"/>
</dbReference>
<dbReference type="GO" id="GO:0042800">
    <property type="term" value="F:histone H3K4 methyltransferase activity"/>
    <property type="evidence" value="ECO:0000314"/>
    <property type="project" value="MGI"/>
</dbReference>
<dbReference type="GO" id="GO:0008270">
    <property type="term" value="F:zinc ion binding"/>
    <property type="evidence" value="ECO:0007669"/>
    <property type="project" value="UniProtKB-KW"/>
</dbReference>
<dbReference type="GO" id="GO:0032259">
    <property type="term" value="P:methylation"/>
    <property type="evidence" value="ECO:0007669"/>
    <property type="project" value="UniProtKB-KW"/>
</dbReference>
<dbReference type="GO" id="GO:0045892">
    <property type="term" value="P:negative regulation of DNA-templated transcription"/>
    <property type="evidence" value="ECO:0000314"/>
    <property type="project" value="MGI"/>
</dbReference>
<dbReference type="GO" id="GO:0045893">
    <property type="term" value="P:positive regulation of DNA-templated transcription"/>
    <property type="evidence" value="ECO:0000250"/>
    <property type="project" value="UniProtKB"/>
</dbReference>
<dbReference type="CDD" id="cd15652">
    <property type="entry name" value="PHD2_NSD3"/>
    <property type="match status" value="1"/>
</dbReference>
<dbReference type="CDD" id="cd15658">
    <property type="entry name" value="PHD4_NSD3"/>
    <property type="match status" value="1"/>
</dbReference>
<dbReference type="CDD" id="cd15661">
    <property type="entry name" value="PHD5_NSD3"/>
    <property type="match status" value="1"/>
</dbReference>
<dbReference type="CDD" id="cd20163">
    <property type="entry name" value="PWWP_NSD3_rpt1"/>
    <property type="match status" value="1"/>
</dbReference>
<dbReference type="CDD" id="cd20166">
    <property type="entry name" value="PWWP_NSD3_rpt2"/>
    <property type="match status" value="1"/>
</dbReference>
<dbReference type="CDD" id="cd19212">
    <property type="entry name" value="SET_NSD3"/>
    <property type="match status" value="1"/>
</dbReference>
<dbReference type="FunFam" id="2.170.270.10:FF:000002">
    <property type="entry name" value="Histone-lysine N-methyltransferase"/>
    <property type="match status" value="1"/>
</dbReference>
<dbReference type="FunFam" id="2.30.30.140:FF:000004">
    <property type="entry name" value="Histone-lysine N-methyltransferase"/>
    <property type="match status" value="1"/>
</dbReference>
<dbReference type="FunFam" id="2.30.30.140:FF:000030">
    <property type="entry name" value="Histone-lysine N-methyltransferase"/>
    <property type="match status" value="1"/>
</dbReference>
<dbReference type="FunFam" id="3.30.40.10:FF:000025">
    <property type="entry name" value="Histone-lysine N-methyltransferase"/>
    <property type="match status" value="1"/>
</dbReference>
<dbReference type="FunFam" id="3.30.40.10:FF:000106">
    <property type="entry name" value="Histone-lysine N-methyltransferase"/>
    <property type="match status" value="1"/>
</dbReference>
<dbReference type="FunFam" id="3.30.40.10:FF:000205">
    <property type="entry name" value="Histone-lysine N-methyltransferase"/>
    <property type="match status" value="1"/>
</dbReference>
<dbReference type="FunFam" id="3.30.40.10:FF:001141">
    <property type="entry name" value="Histone-lysine N-methyltransferase"/>
    <property type="match status" value="1"/>
</dbReference>
<dbReference type="Gene3D" id="2.30.30.140">
    <property type="match status" value="2"/>
</dbReference>
<dbReference type="Gene3D" id="2.170.270.10">
    <property type="entry name" value="SET domain"/>
    <property type="match status" value="1"/>
</dbReference>
<dbReference type="Gene3D" id="3.30.40.10">
    <property type="entry name" value="Zinc/RING finger domain, C3HC4 (zinc finger)"/>
    <property type="match status" value="4"/>
</dbReference>
<dbReference type="InterPro" id="IPR006560">
    <property type="entry name" value="AWS_dom"/>
</dbReference>
<dbReference type="InterPro" id="IPR041306">
    <property type="entry name" value="C5HCH"/>
</dbReference>
<dbReference type="InterPro" id="IPR055198">
    <property type="entry name" value="NSD_PHD"/>
</dbReference>
<dbReference type="InterPro" id="IPR047456">
    <property type="entry name" value="PHD2_NSD3"/>
</dbReference>
<dbReference type="InterPro" id="IPR047458">
    <property type="entry name" value="PHD4_NSD3"/>
</dbReference>
<dbReference type="InterPro" id="IPR047527">
    <property type="entry name" value="PHD5_NSD3"/>
</dbReference>
<dbReference type="InterPro" id="IPR055197">
    <property type="entry name" value="PHDvar_NSD"/>
</dbReference>
<dbReference type="InterPro" id="IPR003616">
    <property type="entry name" value="Post-SET_dom"/>
</dbReference>
<dbReference type="InterPro" id="IPR000313">
    <property type="entry name" value="PWWP_dom"/>
</dbReference>
<dbReference type="InterPro" id="IPR047451">
    <property type="entry name" value="PWWP_NSD3_rpt1"/>
</dbReference>
<dbReference type="InterPro" id="IPR047453">
    <property type="entry name" value="PWWP_NSD3_rpt2"/>
</dbReference>
<dbReference type="InterPro" id="IPR050777">
    <property type="entry name" value="SET2_Histone-Lys_MeTrsfase"/>
</dbReference>
<dbReference type="InterPro" id="IPR001214">
    <property type="entry name" value="SET_dom"/>
</dbReference>
<dbReference type="InterPro" id="IPR046341">
    <property type="entry name" value="SET_dom_sf"/>
</dbReference>
<dbReference type="InterPro" id="IPR047461">
    <property type="entry name" value="SET_NSD3"/>
</dbReference>
<dbReference type="InterPro" id="IPR019786">
    <property type="entry name" value="Zinc_finger_PHD-type_CS"/>
</dbReference>
<dbReference type="InterPro" id="IPR011011">
    <property type="entry name" value="Znf_FYVE_PHD"/>
</dbReference>
<dbReference type="InterPro" id="IPR001965">
    <property type="entry name" value="Znf_PHD"/>
</dbReference>
<dbReference type="InterPro" id="IPR019787">
    <property type="entry name" value="Znf_PHD-finger"/>
</dbReference>
<dbReference type="InterPro" id="IPR013083">
    <property type="entry name" value="Znf_RING/FYVE/PHD"/>
</dbReference>
<dbReference type="PANTHER" id="PTHR22884">
    <property type="entry name" value="SET DOMAIN PROTEINS"/>
    <property type="match status" value="1"/>
</dbReference>
<dbReference type="Pfam" id="PF17907">
    <property type="entry name" value="AWS"/>
    <property type="match status" value="1"/>
</dbReference>
<dbReference type="Pfam" id="PF17982">
    <property type="entry name" value="C5HCH"/>
    <property type="match status" value="1"/>
</dbReference>
<dbReference type="Pfam" id="PF23011">
    <property type="entry name" value="PHD-1st_NSD"/>
    <property type="match status" value="1"/>
</dbReference>
<dbReference type="Pfam" id="PF22908">
    <property type="entry name" value="PHD_NSD"/>
    <property type="match status" value="1"/>
</dbReference>
<dbReference type="Pfam" id="PF23004">
    <property type="entry name" value="PHDvar_NSD"/>
    <property type="match status" value="1"/>
</dbReference>
<dbReference type="Pfam" id="PF00855">
    <property type="entry name" value="PWWP"/>
    <property type="match status" value="2"/>
</dbReference>
<dbReference type="Pfam" id="PF00856">
    <property type="entry name" value="SET"/>
    <property type="match status" value="1"/>
</dbReference>
<dbReference type="SMART" id="SM00570">
    <property type="entry name" value="AWS"/>
    <property type="match status" value="1"/>
</dbReference>
<dbReference type="SMART" id="SM00249">
    <property type="entry name" value="PHD"/>
    <property type="match status" value="5"/>
</dbReference>
<dbReference type="SMART" id="SM00508">
    <property type="entry name" value="PostSET"/>
    <property type="match status" value="1"/>
</dbReference>
<dbReference type="SMART" id="SM00293">
    <property type="entry name" value="PWWP"/>
    <property type="match status" value="2"/>
</dbReference>
<dbReference type="SMART" id="SM00317">
    <property type="entry name" value="SET"/>
    <property type="match status" value="1"/>
</dbReference>
<dbReference type="SUPFAM" id="SSF57903">
    <property type="entry name" value="FYVE/PHD zinc finger"/>
    <property type="match status" value="3"/>
</dbReference>
<dbReference type="SUPFAM" id="SSF82199">
    <property type="entry name" value="SET domain"/>
    <property type="match status" value="1"/>
</dbReference>
<dbReference type="SUPFAM" id="SSF63748">
    <property type="entry name" value="Tudor/PWWP/MBT"/>
    <property type="match status" value="2"/>
</dbReference>
<dbReference type="PROSITE" id="PS51215">
    <property type="entry name" value="AWS"/>
    <property type="match status" value="1"/>
</dbReference>
<dbReference type="PROSITE" id="PS50868">
    <property type="entry name" value="POST_SET"/>
    <property type="match status" value="1"/>
</dbReference>
<dbReference type="PROSITE" id="PS50812">
    <property type="entry name" value="PWWP"/>
    <property type="match status" value="2"/>
</dbReference>
<dbReference type="PROSITE" id="PS50280">
    <property type="entry name" value="SET"/>
    <property type="match status" value="1"/>
</dbReference>
<dbReference type="PROSITE" id="PS01359">
    <property type="entry name" value="ZF_PHD_1"/>
    <property type="match status" value="1"/>
</dbReference>
<dbReference type="PROSITE" id="PS50016">
    <property type="entry name" value="ZF_PHD_2"/>
    <property type="match status" value="2"/>
</dbReference>
<reference key="1">
    <citation type="journal article" date="2005" name="Science">
        <title>The transcriptional landscape of the mammalian genome.</title>
        <authorList>
            <person name="Carninci P."/>
            <person name="Kasukawa T."/>
            <person name="Katayama S."/>
            <person name="Gough J."/>
            <person name="Frith M.C."/>
            <person name="Maeda N."/>
            <person name="Oyama R."/>
            <person name="Ravasi T."/>
            <person name="Lenhard B."/>
            <person name="Wells C."/>
            <person name="Kodzius R."/>
            <person name="Shimokawa K."/>
            <person name="Bajic V.B."/>
            <person name="Brenner S.E."/>
            <person name="Batalov S."/>
            <person name="Forrest A.R."/>
            <person name="Zavolan M."/>
            <person name="Davis M.J."/>
            <person name="Wilming L.G."/>
            <person name="Aidinis V."/>
            <person name="Allen J.E."/>
            <person name="Ambesi-Impiombato A."/>
            <person name="Apweiler R."/>
            <person name="Aturaliya R.N."/>
            <person name="Bailey T.L."/>
            <person name="Bansal M."/>
            <person name="Baxter L."/>
            <person name="Beisel K.W."/>
            <person name="Bersano T."/>
            <person name="Bono H."/>
            <person name="Chalk A.M."/>
            <person name="Chiu K.P."/>
            <person name="Choudhary V."/>
            <person name="Christoffels A."/>
            <person name="Clutterbuck D.R."/>
            <person name="Crowe M.L."/>
            <person name="Dalla E."/>
            <person name="Dalrymple B.P."/>
            <person name="de Bono B."/>
            <person name="Della Gatta G."/>
            <person name="di Bernardo D."/>
            <person name="Down T."/>
            <person name="Engstrom P."/>
            <person name="Fagiolini M."/>
            <person name="Faulkner G."/>
            <person name="Fletcher C.F."/>
            <person name="Fukushima T."/>
            <person name="Furuno M."/>
            <person name="Futaki S."/>
            <person name="Gariboldi M."/>
            <person name="Georgii-Hemming P."/>
            <person name="Gingeras T.R."/>
            <person name="Gojobori T."/>
            <person name="Green R.E."/>
            <person name="Gustincich S."/>
            <person name="Harbers M."/>
            <person name="Hayashi Y."/>
            <person name="Hensch T.K."/>
            <person name="Hirokawa N."/>
            <person name="Hill D."/>
            <person name="Huminiecki L."/>
            <person name="Iacono M."/>
            <person name="Ikeo K."/>
            <person name="Iwama A."/>
            <person name="Ishikawa T."/>
            <person name="Jakt M."/>
            <person name="Kanapin A."/>
            <person name="Katoh M."/>
            <person name="Kawasawa Y."/>
            <person name="Kelso J."/>
            <person name="Kitamura H."/>
            <person name="Kitano H."/>
            <person name="Kollias G."/>
            <person name="Krishnan S.P."/>
            <person name="Kruger A."/>
            <person name="Kummerfeld S.K."/>
            <person name="Kurochkin I.V."/>
            <person name="Lareau L.F."/>
            <person name="Lazarevic D."/>
            <person name="Lipovich L."/>
            <person name="Liu J."/>
            <person name="Liuni S."/>
            <person name="McWilliam S."/>
            <person name="Madan Babu M."/>
            <person name="Madera M."/>
            <person name="Marchionni L."/>
            <person name="Matsuda H."/>
            <person name="Matsuzawa S."/>
            <person name="Miki H."/>
            <person name="Mignone F."/>
            <person name="Miyake S."/>
            <person name="Morris K."/>
            <person name="Mottagui-Tabar S."/>
            <person name="Mulder N."/>
            <person name="Nakano N."/>
            <person name="Nakauchi H."/>
            <person name="Ng P."/>
            <person name="Nilsson R."/>
            <person name="Nishiguchi S."/>
            <person name="Nishikawa S."/>
            <person name="Nori F."/>
            <person name="Ohara O."/>
            <person name="Okazaki Y."/>
            <person name="Orlando V."/>
            <person name="Pang K.C."/>
            <person name="Pavan W.J."/>
            <person name="Pavesi G."/>
            <person name="Pesole G."/>
            <person name="Petrovsky N."/>
            <person name="Piazza S."/>
            <person name="Reed J."/>
            <person name="Reid J.F."/>
            <person name="Ring B.Z."/>
            <person name="Ringwald M."/>
            <person name="Rost B."/>
            <person name="Ruan Y."/>
            <person name="Salzberg S.L."/>
            <person name="Sandelin A."/>
            <person name="Schneider C."/>
            <person name="Schoenbach C."/>
            <person name="Sekiguchi K."/>
            <person name="Semple C.A."/>
            <person name="Seno S."/>
            <person name="Sessa L."/>
            <person name="Sheng Y."/>
            <person name="Shibata Y."/>
            <person name="Shimada H."/>
            <person name="Shimada K."/>
            <person name="Silva D."/>
            <person name="Sinclair B."/>
            <person name="Sperling S."/>
            <person name="Stupka E."/>
            <person name="Sugiura K."/>
            <person name="Sultana R."/>
            <person name="Takenaka Y."/>
            <person name="Taki K."/>
            <person name="Tammoja K."/>
            <person name="Tan S.L."/>
            <person name="Tang S."/>
            <person name="Taylor M.S."/>
            <person name="Tegner J."/>
            <person name="Teichmann S.A."/>
            <person name="Ueda H.R."/>
            <person name="van Nimwegen E."/>
            <person name="Verardo R."/>
            <person name="Wei C.L."/>
            <person name="Yagi K."/>
            <person name="Yamanishi H."/>
            <person name="Zabarovsky E."/>
            <person name="Zhu S."/>
            <person name="Zimmer A."/>
            <person name="Hide W."/>
            <person name="Bult C."/>
            <person name="Grimmond S.M."/>
            <person name="Teasdale R.D."/>
            <person name="Liu E.T."/>
            <person name="Brusic V."/>
            <person name="Quackenbush J."/>
            <person name="Wahlestedt C."/>
            <person name="Mattick J.S."/>
            <person name="Hume D.A."/>
            <person name="Kai C."/>
            <person name="Sasaki D."/>
            <person name="Tomaru Y."/>
            <person name="Fukuda S."/>
            <person name="Kanamori-Katayama M."/>
            <person name="Suzuki M."/>
            <person name="Aoki J."/>
            <person name="Arakawa T."/>
            <person name="Iida J."/>
            <person name="Imamura K."/>
            <person name="Itoh M."/>
            <person name="Kato T."/>
            <person name="Kawaji H."/>
            <person name="Kawagashira N."/>
            <person name="Kawashima T."/>
            <person name="Kojima M."/>
            <person name="Kondo S."/>
            <person name="Konno H."/>
            <person name="Nakano K."/>
            <person name="Ninomiya N."/>
            <person name="Nishio T."/>
            <person name="Okada M."/>
            <person name="Plessy C."/>
            <person name="Shibata K."/>
            <person name="Shiraki T."/>
            <person name="Suzuki S."/>
            <person name="Tagami M."/>
            <person name="Waki K."/>
            <person name="Watahiki A."/>
            <person name="Okamura-Oho Y."/>
            <person name="Suzuki H."/>
            <person name="Kawai J."/>
            <person name="Hayashizaki Y."/>
        </authorList>
    </citation>
    <scope>NUCLEOTIDE SEQUENCE [LARGE SCALE MRNA] (ISOFORMS 2; 3 AND 4)</scope>
    <source>
        <strain>C57BL/6J</strain>
        <strain>NOD</strain>
        <tissue>Aorta</tissue>
        <tissue>Spleen</tissue>
        <tissue>Testis</tissue>
        <tissue>Vein</tissue>
    </source>
</reference>
<reference key="2">
    <citation type="journal article" date="2009" name="PLoS Biol.">
        <title>Lineage-specific biology revealed by a finished genome assembly of the mouse.</title>
        <authorList>
            <person name="Church D.M."/>
            <person name="Goodstadt L."/>
            <person name="Hillier L.W."/>
            <person name="Zody M.C."/>
            <person name="Goldstein S."/>
            <person name="She X."/>
            <person name="Bult C.J."/>
            <person name="Agarwala R."/>
            <person name="Cherry J.L."/>
            <person name="DiCuccio M."/>
            <person name="Hlavina W."/>
            <person name="Kapustin Y."/>
            <person name="Meric P."/>
            <person name="Maglott D."/>
            <person name="Birtle Z."/>
            <person name="Marques A.C."/>
            <person name="Graves T."/>
            <person name="Zhou S."/>
            <person name="Teague B."/>
            <person name="Potamousis K."/>
            <person name="Churas C."/>
            <person name="Place M."/>
            <person name="Herschleb J."/>
            <person name="Runnheim R."/>
            <person name="Forrest D."/>
            <person name="Amos-Landgraf J."/>
            <person name="Schwartz D.C."/>
            <person name="Cheng Z."/>
            <person name="Lindblad-Toh K."/>
            <person name="Eichler E.E."/>
            <person name="Ponting C.P."/>
        </authorList>
    </citation>
    <scope>NUCLEOTIDE SEQUENCE [LARGE SCALE GENOMIC DNA]</scope>
    <source>
        <strain>C57BL/6J</strain>
    </source>
</reference>
<reference key="3">
    <citation type="journal article" date="2004" name="Genome Res.">
        <title>The status, quality, and expansion of the NIH full-length cDNA project: the Mammalian Gene Collection (MGC).</title>
        <authorList>
            <consortium name="The MGC Project Team"/>
        </authorList>
    </citation>
    <scope>NUCLEOTIDE SEQUENCE [LARGE SCALE MRNA] (ISOFORM 2)</scope>
    <source>
        <strain>C57BL/6J</strain>
        <tissue>Brain</tissue>
    </source>
</reference>
<reference key="4">
    <citation type="submission" date="2009-01" db="UniProtKB">
        <authorList>
            <person name="Lubec G."/>
            <person name="Sunyer B."/>
            <person name="Chen W.-Q."/>
        </authorList>
    </citation>
    <scope>PROTEIN SEQUENCE OF 899-914</scope>
    <scope>IDENTIFICATION BY MASS SPECTROMETRY</scope>
    <source>
        <strain>OF1</strain>
        <tissue>Hippocampus</tissue>
    </source>
</reference>
<reference key="5">
    <citation type="journal article" date="2007" name="Proc. Natl. Acad. Sci. U.S.A.">
        <title>Large-scale phosphorylation analysis of mouse liver.</title>
        <authorList>
            <person name="Villen J."/>
            <person name="Beausoleil S.A."/>
            <person name="Gerber S.A."/>
            <person name="Gygi S.P."/>
        </authorList>
    </citation>
    <scope>IDENTIFICATION BY MASS SPECTROMETRY [LARGE SCALE ANALYSIS]</scope>
    <source>
        <tissue>Liver</tissue>
    </source>
</reference>
<reference key="6">
    <citation type="journal article" date="2009" name="Immunity">
        <title>The phagosomal proteome in interferon-gamma-activated macrophages.</title>
        <authorList>
            <person name="Trost M."/>
            <person name="English L."/>
            <person name="Lemieux S."/>
            <person name="Courcelles M."/>
            <person name="Desjardins M."/>
            <person name="Thibault P."/>
        </authorList>
    </citation>
    <scope>IDENTIFICATION BY MASS SPECTROMETRY [LARGE SCALE ANALYSIS]</scope>
</reference>
<reference key="7">
    <citation type="journal article" date="2010" name="Cell">
        <title>A tissue-specific atlas of mouse protein phosphorylation and expression.</title>
        <authorList>
            <person name="Huttlin E.L."/>
            <person name="Jedrychowski M.P."/>
            <person name="Elias J.E."/>
            <person name="Goswami T."/>
            <person name="Rad R."/>
            <person name="Beausoleil S.A."/>
            <person name="Villen J."/>
            <person name="Haas W."/>
            <person name="Sowa M.E."/>
            <person name="Gygi S.P."/>
        </authorList>
    </citation>
    <scope>IDENTIFICATION BY MASS SPECTROMETRY [LARGE SCALE ANALYSIS]</scope>
    <source>
        <tissue>Liver</tissue>
        <tissue>Spleen</tissue>
        <tissue>Testis</tissue>
    </source>
</reference>
<reference key="8">
    <citation type="journal article" date="2013" name="Mol. Cell">
        <title>SIRT5-mediated lysine desuccinylation impacts diverse metabolic pathways.</title>
        <authorList>
            <person name="Park J."/>
            <person name="Chen Y."/>
            <person name="Tishkoff D.X."/>
            <person name="Peng C."/>
            <person name="Tan M."/>
            <person name="Dai L."/>
            <person name="Xie Z."/>
            <person name="Zhang Y."/>
            <person name="Zwaans B.M."/>
            <person name="Skinner M.E."/>
            <person name="Lombard D.B."/>
            <person name="Zhao Y."/>
        </authorList>
    </citation>
    <scope>ACETYLATION [LARGE SCALE ANALYSIS] AT LYS-790</scope>
    <scope>IDENTIFICATION BY MASS SPECTROMETRY [LARGE SCALE ANALYSIS]</scope>
    <source>
        <tissue>Embryonic fibroblast</tissue>
    </source>
</reference>
<evidence type="ECO:0000250" key="1"/>
<evidence type="ECO:0000250" key="2">
    <source>
        <dbReference type="UniProtKB" id="Q9BZ95"/>
    </source>
</evidence>
<evidence type="ECO:0000255" key="3"/>
<evidence type="ECO:0000255" key="4">
    <source>
        <dbReference type="PROSITE-ProRule" id="PRU00146"/>
    </source>
</evidence>
<evidence type="ECO:0000255" key="5">
    <source>
        <dbReference type="PROSITE-ProRule" id="PRU00155"/>
    </source>
</evidence>
<evidence type="ECO:0000255" key="6">
    <source>
        <dbReference type="PROSITE-ProRule" id="PRU00162"/>
    </source>
</evidence>
<evidence type="ECO:0000255" key="7">
    <source>
        <dbReference type="PROSITE-ProRule" id="PRU00190"/>
    </source>
</evidence>
<evidence type="ECO:0000255" key="8">
    <source>
        <dbReference type="PROSITE-ProRule" id="PRU00562"/>
    </source>
</evidence>
<evidence type="ECO:0000256" key="9">
    <source>
        <dbReference type="SAM" id="MobiDB-lite"/>
    </source>
</evidence>
<evidence type="ECO:0000303" key="10">
    <source>
    </source>
</evidence>
<evidence type="ECO:0000303" key="11">
    <source>
    </source>
</evidence>
<evidence type="ECO:0000305" key="12"/>
<evidence type="ECO:0007744" key="13">
    <source>
    </source>
</evidence>
<proteinExistence type="evidence at protein level"/>
<accession>Q6P2L6</accession>
<accession>Q3TDS4</accession>
<accession>Q3U0L8</accession>
<accession>Q3V131</accession>
<accession>Q8BJT3</accession>
<feature type="chain" id="PRO_0000259522" description="Histone-lysine N-methyltransferase NSD3">
    <location>
        <begin position="1"/>
        <end position="1439"/>
    </location>
</feature>
<feature type="domain" description="PWWP 1" evidence="6">
    <location>
        <begin position="270"/>
        <end position="333"/>
    </location>
</feature>
<feature type="domain" description="PWWP 2" evidence="6">
    <location>
        <begin position="960"/>
        <end position="1025"/>
    </location>
</feature>
<feature type="domain" description="AWS" evidence="8">
    <location>
        <begin position="1096"/>
        <end position="1146"/>
    </location>
</feature>
<feature type="domain" description="SET" evidence="7">
    <location>
        <begin position="1148"/>
        <end position="1265"/>
    </location>
</feature>
<feature type="domain" description="Post-SET" evidence="5">
    <location>
        <begin position="1272"/>
        <end position="1288"/>
    </location>
</feature>
<feature type="zinc finger region" description="PHD-type 1" evidence="4">
    <location>
        <begin position="701"/>
        <end position="748"/>
    </location>
</feature>
<feature type="zinc finger region" description="PHD-type 2" evidence="4">
    <location>
        <begin position="749"/>
        <end position="805"/>
    </location>
</feature>
<feature type="zinc finger region" description="PHD-type 3" evidence="4">
    <location>
        <begin position="862"/>
        <end position="955"/>
    </location>
</feature>
<feature type="zinc finger region" description="PHD-type 4; atypical" evidence="4">
    <location>
        <begin position="1323"/>
        <end position="1370"/>
    </location>
</feature>
<feature type="region of interest" description="Disordered" evidence="9">
    <location>
        <begin position="121"/>
        <end position="151"/>
    </location>
</feature>
<feature type="region of interest" description="Disordered" evidence="9">
    <location>
        <begin position="181"/>
        <end position="247"/>
    </location>
</feature>
<feature type="region of interest" description="Disordered" evidence="9">
    <location>
        <begin position="344"/>
        <end position="367"/>
    </location>
</feature>
<feature type="region of interest" description="Disordered" evidence="9">
    <location>
        <begin position="401"/>
        <end position="466"/>
    </location>
</feature>
<feature type="region of interest" description="Disordered" evidence="9">
    <location>
        <begin position="540"/>
        <end position="695"/>
    </location>
</feature>
<feature type="coiled-coil region" evidence="3">
    <location>
        <begin position="1036"/>
        <end position="1065"/>
    </location>
</feature>
<feature type="short sequence motif" description="KIKL" evidence="2">
    <location>
        <begin position="154"/>
        <end position="157"/>
    </location>
</feature>
<feature type="compositionally biased region" description="Pro residues" evidence="9">
    <location>
        <begin position="128"/>
        <end position="139"/>
    </location>
</feature>
<feature type="compositionally biased region" description="Basic residues" evidence="9">
    <location>
        <begin position="187"/>
        <end position="201"/>
    </location>
</feature>
<feature type="compositionally biased region" description="Basic and acidic residues" evidence="9">
    <location>
        <begin position="202"/>
        <end position="244"/>
    </location>
</feature>
<feature type="compositionally biased region" description="Polar residues" evidence="9">
    <location>
        <begin position="401"/>
        <end position="413"/>
    </location>
</feature>
<feature type="compositionally biased region" description="Polar residues" evidence="9">
    <location>
        <begin position="425"/>
        <end position="445"/>
    </location>
</feature>
<feature type="compositionally biased region" description="Polar residues" evidence="9">
    <location>
        <begin position="546"/>
        <end position="568"/>
    </location>
</feature>
<feature type="compositionally biased region" description="Basic and acidic residues" evidence="9">
    <location>
        <begin position="583"/>
        <end position="595"/>
    </location>
</feature>
<feature type="compositionally biased region" description="Polar residues" evidence="9">
    <location>
        <begin position="637"/>
        <end position="648"/>
    </location>
</feature>
<feature type="compositionally biased region" description="Low complexity" evidence="9">
    <location>
        <begin position="670"/>
        <end position="691"/>
    </location>
</feature>
<feature type="modified residue" description="Phosphoserine" evidence="2">
    <location>
        <position position="150"/>
    </location>
</feature>
<feature type="modified residue" description="Phosphoserine" evidence="2">
    <location>
        <position position="457"/>
    </location>
</feature>
<feature type="modified residue" description="Phosphoserine" evidence="2">
    <location>
        <position position="585"/>
    </location>
</feature>
<feature type="modified residue" description="Phosphoserine" evidence="2">
    <location>
        <position position="587"/>
    </location>
</feature>
<feature type="modified residue" description="Phosphoserine" evidence="2">
    <location>
        <position position="590"/>
    </location>
</feature>
<feature type="modified residue" description="Phosphoserine" evidence="2">
    <location>
        <position position="655"/>
    </location>
</feature>
<feature type="modified residue" description="N6-acetyllysine" evidence="13">
    <location>
        <position position="790"/>
    </location>
</feature>
<feature type="cross-link" description="Glycyl lysine isopeptide (Lys-Gly) (interchain with G-Cter in SUMO2)" evidence="2">
    <location>
        <position position="218"/>
    </location>
</feature>
<feature type="cross-link" description="Glycyl lysine isopeptide (Lys-Gly) (interchain with G-Cter in SUMO2)" evidence="2">
    <location>
        <position position="245"/>
    </location>
</feature>
<feature type="cross-link" description="Glycyl lysine isopeptide (Lys-Gly) (interchain with G-Cter in SUMO2)" evidence="2">
    <location>
        <position position="413"/>
    </location>
</feature>
<feature type="cross-link" description="Glycyl lysine isopeptide (Lys-Gly) (interchain with G-Cter in SUMO2)" evidence="2">
    <location>
        <position position="502"/>
    </location>
</feature>
<feature type="cross-link" description="Glycyl lysine isopeptide (Lys-Gly) (interchain with G-Cter in SUMO2)" evidence="2">
    <location>
        <position position="532"/>
    </location>
</feature>
<feature type="cross-link" description="Glycyl lysine isopeptide (Lys-Gly) (interchain with G-Cter in SUMO2)" evidence="2">
    <location>
        <position position="628"/>
    </location>
</feature>
<feature type="cross-link" description="Glycyl lysine isopeptide (Lys-Gly) (interchain with G-Cter in SUMO2)" evidence="2">
    <location>
        <position position="1154"/>
    </location>
</feature>
<feature type="splice variant" id="VSP_021431" description="In isoform 3." evidence="11">
    <location>
        <begin position="1"/>
        <end position="941"/>
    </location>
</feature>
<feature type="splice variant" id="VSP_021432" description="In isoform 2 and isoform 4." evidence="10 11">
    <original>P</original>
    <variation>PLPPPPPPPPP</variation>
    <location>
        <position position="135"/>
    </location>
</feature>
<feature type="splice variant" id="VSP_021433" description="In isoform 4." evidence="11">
    <original>QVETAPQAS</original>
    <variation>QVGFLHVES</variation>
    <location>
        <begin position="603"/>
        <end position="611"/>
    </location>
</feature>
<feature type="splice variant" id="VSP_021434" description="In isoform 4." evidence="11">
    <location>
        <begin position="612"/>
        <end position="1439"/>
    </location>
</feature>
<feature type="splice variant" id="VSP_021435" description="In isoform 2." evidence="10 11">
    <original>ASEISDSCKPLKKRSRASTDVETASC</original>
    <variation>SADRGAQGSVRFSDSSVSAAKEETVD</variation>
    <location>
        <begin position="620"/>
        <end position="645"/>
    </location>
</feature>
<feature type="splice variant" id="VSP_021436" description="In isoform 2." evidence="10 11">
    <location>
        <begin position="646"/>
        <end position="1439"/>
    </location>
</feature>
<feature type="splice variant" id="VSP_021437" description="In isoform 3." evidence="11">
    <location>
        <begin position="973"/>
        <end position="975"/>
    </location>
</feature>
<feature type="splice variant" id="VSP_021438" description="In isoform 3." evidence="11">
    <location>
        <begin position="1199"/>
        <end position="1209"/>
    </location>
</feature>
<feature type="sequence conflict" description="In Ref. 1; BAE33834." evidence="12" ref="1">
    <original>H</original>
    <variation>R</variation>
    <location>
        <position position="122"/>
    </location>
</feature>
<feature type="sequence conflict" description="In Ref. 1; BAE21322." evidence="12" ref="1">
    <original>N</original>
    <variation>K</variation>
    <location>
        <position position="950"/>
    </location>
</feature>
<feature type="sequence conflict" description="In Ref. 1; BAE21322." evidence="12" ref="1">
    <original>D</original>
    <variation>N</variation>
    <location>
        <position position="1149"/>
    </location>
</feature>
<sequence length="1439" mass="161002">MDFSFSFMQGIMGNTIQQPPQLIDSANIRQEDAFDNHSDIVEDGGPTPFEATLQQGFQYPPTTEDLPPLTNGYPPSISLYETQTKYPPYNQYPNGSANGFGAVRNFSPTDYYHSEIPNTRPHEILEKPSPPQPPPPPSVPQTVIPKKTGSPEIKLKITKTIQNGRELFESSLCGDLLNEVQASEHTKSKHESRKEKRKKSNRHESSRSEERRSHKIPKLEPEGQNRPNERVDTAPEKPREEPVLKEAIPVQPILSSVPTTETSTGVKFQVGDLVWSKVGTYPWWPCMVSSDPQLEVHSKINTRGAREYHVQFFSNQPERAWVHEKRVREYKGHEQYEELLAEAAKQASNHSEKQKIRKPRPQRERAQWDIGIAHAEKALKMTREERVEQYTFIYIDKQPEEASSQAKKNVTSKTEVKKPRRPRSVLNSQPEQTNAGEVASSQSSTDLRRQSQRRHTSLEEEEPPPVKIAWKTAAARKSLPASITMHKGSLDLQKCNMSPVVKIEQVFALQNATGDGKFIDQFVYSTKGIGNKTEISVRGQDRLIISSPSQRSEKPAQSASSPEATSGSAGPVEKKQQRRSIRTRSESEKSAEVVPKKKIKKEQVETAPQASLKTGLQKGASEISDSCKPLKKRSRASTDVETASCTYRDTSDSDSRGLSDGQVGFGKQVDSPSATADADASDAQSVDSSLSRRGVGTSKKDTVCQVCEKAGDCLVACEGECCRHFHVECLGLTAVPEGHFTCEECETGQHPCFSCKVSGKDVKRCSVSVCGKFYHEACVRKFPTAIFESKGFRCPQHCCSSCSMEKDIHKASKGRMMRCLRCPVAYHVGDACVAAGSVSVSSHILICSNHSKRSSQSAAINVGFCFVCARGLIVQDHSDPMFSSYAYKSHYLLSESNRAELMKLPMIPSSSASKKRCEKGGRLLCCESCPASFHPECLSIDMPEGCWNCNDCKAGKKLHYKQIVWVKLGNYRQVLWWPAEICSPRSVPLNIQGLKHDLGDFPVFFFGSHDYYWVHQGRVFPYVEGDKHFAEGQTSINKTFKKALEEAAKRFQELKAQRESKEALEMERTSRKPPPYKHIKANKVIGKVQVQVADLSEIPRCNCKPGDENPCGLESQCLNRMSQYECHPQVCPAGDRCQNQCFTKRLYPDAEVIKTERRGWGLRTKRSIKKGEFVNEYVGELIDEEECRLRIKRAHENSVTNFYMLTVTKDRIIDAGPKGNYSRFMNHSCNPNCETQKWTVNGDVRVGLFALCDIPAGMELTFNYNLDCLGNGRTVCHCGADNCSGFLGVRPKSACTSAVDEKTKNAKLKKRRKVKAEAKPIHEDYCFQCGDGGELVMCDKKDCPKAYHLLCLNLTQPPHGKWECPWHRCDECGSVAVSFCEFCPHSFCKAHGKGALVPSALEGRLCCSSHDPASPVSPEYWSKIRCKWESQDSGEEVKE</sequence>
<keyword id="KW-0007">Acetylation</keyword>
<keyword id="KW-0025">Alternative splicing</keyword>
<keyword id="KW-0156">Chromatin regulator</keyword>
<keyword id="KW-0158">Chromosome</keyword>
<keyword id="KW-0175">Coiled coil</keyword>
<keyword id="KW-0903">Direct protein sequencing</keyword>
<keyword id="KW-1017">Isopeptide bond</keyword>
<keyword id="KW-0479">Metal-binding</keyword>
<keyword id="KW-0489">Methyltransferase</keyword>
<keyword id="KW-0539">Nucleus</keyword>
<keyword id="KW-0597">Phosphoprotein</keyword>
<keyword id="KW-1185">Reference proteome</keyword>
<keyword id="KW-0677">Repeat</keyword>
<keyword id="KW-0949">S-adenosyl-L-methionine</keyword>
<keyword id="KW-0804">Transcription</keyword>
<keyword id="KW-0805">Transcription regulation</keyword>
<keyword id="KW-0808">Transferase</keyword>
<keyword id="KW-0832">Ubl conjugation</keyword>
<keyword id="KW-0862">Zinc</keyword>
<keyword id="KW-0863">Zinc-finger</keyword>
<name>NSD3_MOUSE</name>
<comment type="function">
    <text evidence="2">Histone methyltransferase. Preferentially dimethylates 'Lys-4' and 'Lys-27' of histone H3 forming H3K4me2 and H3K27me2. H3 'Lys-4' methylation represents a specific tag for epigenetic transcriptional activation, while 'Lys-27' is a mark for transcriptional repression.</text>
</comment>
<comment type="catalytic activity">
    <reaction evidence="2">
        <text>L-lysyl(4)-[histone H3] + 2 S-adenosyl-L-methionine = N(6),N(6)-dimethyl-L-lysyl(4)-[histone H3] + 2 S-adenosyl-L-homocysteine + 2 H(+)</text>
        <dbReference type="Rhea" id="RHEA:64448"/>
        <dbReference type="Rhea" id="RHEA-COMP:15540"/>
        <dbReference type="Rhea" id="RHEA-COMP:15547"/>
        <dbReference type="ChEBI" id="CHEBI:15378"/>
        <dbReference type="ChEBI" id="CHEBI:29969"/>
        <dbReference type="ChEBI" id="CHEBI:57856"/>
        <dbReference type="ChEBI" id="CHEBI:59789"/>
        <dbReference type="ChEBI" id="CHEBI:61976"/>
        <dbReference type="EC" id="2.1.1.370"/>
    </reaction>
</comment>
<comment type="catalytic activity">
    <reaction evidence="2">
        <text>L-lysyl(27)-[histone H3] + 2 S-adenosyl-L-methionine = N(6),N(6)-dimethyl-L-lysyl(27)-[histone H3] + 2 S-adenosyl-L-homocysteine + 2 H(+)</text>
        <dbReference type="Rhea" id="RHEA:64452"/>
        <dbReference type="Rhea" id="RHEA-COMP:15539"/>
        <dbReference type="Rhea" id="RHEA-COMP:15548"/>
        <dbReference type="ChEBI" id="CHEBI:15378"/>
        <dbReference type="ChEBI" id="CHEBI:29969"/>
        <dbReference type="ChEBI" id="CHEBI:57856"/>
        <dbReference type="ChEBI" id="CHEBI:59789"/>
        <dbReference type="ChEBI" id="CHEBI:61976"/>
        <dbReference type="EC" id="2.1.1.371"/>
    </reaction>
</comment>
<comment type="subunit">
    <text evidence="2">Interacts with BRD4 (By similarity). Interacts (via KIKL motif) with BRD3 (via NET domain) (By similarity).</text>
</comment>
<comment type="subcellular location">
    <subcellularLocation>
        <location evidence="1">Nucleus</location>
    </subcellularLocation>
    <subcellularLocation>
        <location evidence="1">Chromosome</location>
    </subcellularLocation>
</comment>
<comment type="alternative products">
    <event type="alternative splicing"/>
    <isoform>
        <id>Q6P2L6-1</id>
        <name>1</name>
        <sequence type="displayed"/>
    </isoform>
    <isoform>
        <id>Q6P2L6-2</id>
        <name>2</name>
        <sequence type="described" ref="VSP_021432 VSP_021435 VSP_021436"/>
    </isoform>
    <isoform>
        <id>Q6P2L6-3</id>
        <name>3</name>
        <sequence type="described" ref="VSP_021431 VSP_021437 VSP_021438"/>
    </isoform>
    <isoform>
        <id>Q6P2L6-4</id>
        <name>4</name>
        <sequence type="described" ref="VSP_021432 VSP_021433 VSP_021434"/>
    </isoform>
</comment>
<comment type="domain">
    <text evidence="2">The KIKL motif recognizes and binds the NET domain of BRD3.</text>
</comment>
<comment type="similarity">
    <text evidence="7">Belongs to the class V-like SAM-binding methyltransferase superfamily. Histone-lysine methyltransferase family. SET2 subfamily.</text>
</comment>
<protein>
    <recommendedName>
        <fullName>Histone-lysine N-methyltransferase NSD3</fullName>
        <ecNumber evidence="2">2.1.1.370</ecNumber>
        <ecNumber evidence="2">2.1.1.371</ecNumber>
    </recommendedName>
    <alternativeName>
        <fullName>Nuclear SET domain-containing protein 3</fullName>
    </alternativeName>
    <alternativeName>
        <fullName>Wolf-Hirschhorn syndrome candidate 1-like protein 1 homolog</fullName>
        <shortName>WHSC1-like protein 1</shortName>
    </alternativeName>
</protein>